<sequence length="44" mass="4883">DVCDSLVDGRCIHNGCFCEESKPNGNCCDSGGCVWWWCPGTKWD</sequence>
<name>COC3B_CONCL</name>
<comment type="function">
    <text evidence="1">Mu-conotoxins block voltage-gated sodium channels. This toxin reversibly blocks voltage-gated sodium channel in cephalopods, with no alteration in the voltage dependence of sodium conductance or on the kinetics of inactivation (By similarity).</text>
</comment>
<comment type="subcellular location">
    <subcellularLocation>
        <location evidence="1">Secreted</location>
    </subcellularLocation>
</comment>
<comment type="tissue specificity">
    <text>Expressed by the venom duct.</text>
</comment>
<comment type="domain">
    <text>The cysteine framework is XII (C-C-C-C-CC-C-C).</text>
</comment>
<organism>
    <name type="scientific">Californiconus californicus</name>
    <name type="common">California cone</name>
    <name type="synonym">Conus californicus</name>
    <dbReference type="NCBI Taxonomy" id="1736779"/>
    <lineage>
        <taxon>Eukaryota</taxon>
        <taxon>Metazoa</taxon>
        <taxon>Spiralia</taxon>
        <taxon>Lophotrochozoa</taxon>
        <taxon>Mollusca</taxon>
        <taxon>Gastropoda</taxon>
        <taxon>Caenogastropoda</taxon>
        <taxon>Neogastropoda</taxon>
        <taxon>Conoidea</taxon>
        <taxon>Conidae</taxon>
        <taxon>Californiconus</taxon>
    </lineage>
</organism>
<proteinExistence type="evidence at transcript level"/>
<protein>
    <recommendedName>
        <fullName>Mu-conotoxin-like Cal 12.1.3b</fullName>
    </recommendedName>
    <alternativeName>
        <fullName>Conotoxin CalTx 12.1.4D</fullName>
    </alternativeName>
</protein>
<dbReference type="EMBL" id="EF644195">
    <property type="protein sequence ID" value="ABR92965.1"/>
    <property type="molecule type" value="mRNA"/>
</dbReference>
<dbReference type="ConoServer" id="814">
    <property type="toxin name" value="Cal12.1.3b"/>
</dbReference>
<dbReference type="GO" id="GO:0005576">
    <property type="term" value="C:extracellular region"/>
    <property type="evidence" value="ECO:0007669"/>
    <property type="project" value="UniProtKB-SubCell"/>
</dbReference>
<dbReference type="GO" id="GO:0099106">
    <property type="term" value="F:ion channel regulator activity"/>
    <property type="evidence" value="ECO:0007669"/>
    <property type="project" value="UniProtKB-KW"/>
</dbReference>
<dbReference type="GO" id="GO:0090729">
    <property type="term" value="F:toxin activity"/>
    <property type="evidence" value="ECO:0007669"/>
    <property type="project" value="UniProtKB-KW"/>
</dbReference>
<keyword id="KW-0102">Bromination</keyword>
<keyword id="KW-1015">Disulfide bond</keyword>
<keyword id="KW-0379">Hydroxylation</keyword>
<keyword id="KW-0872">Ion channel impairing toxin</keyword>
<keyword id="KW-0528">Neurotoxin</keyword>
<keyword id="KW-0964">Secreted</keyword>
<keyword id="KW-0800">Toxin</keyword>
<feature type="peptide" id="PRO_0000392278" description="Mu-conotoxin-like Cal 12.1.3b">
    <location>
        <begin position="1"/>
        <end position="44"/>
    </location>
</feature>
<feature type="modified residue" description="4-hydroxyproline" evidence="1">
    <location>
        <position position="23"/>
    </location>
</feature>
<feature type="modified residue" description="6'-bromotryptophan" evidence="1">
    <location>
        <position position="36"/>
    </location>
</feature>
<feature type="modified residue" description="6'-bromotryptophan" evidence="1">
    <location>
        <position position="37"/>
    </location>
</feature>
<feature type="modified residue" description="4-hydroxyproline" evidence="1">
    <location>
        <position position="39"/>
    </location>
</feature>
<feature type="modified residue" description="6'-bromotryptophan" evidence="1">
    <location>
        <position position="43"/>
    </location>
</feature>
<feature type="disulfide bond" evidence="2">
    <location>
        <begin position="3"/>
        <end position="16"/>
    </location>
</feature>
<feature type="disulfide bond" evidence="1">
    <location>
        <begin position="11"/>
        <end position="28"/>
    </location>
</feature>
<feature type="disulfide bond" evidence="1">
    <location>
        <begin position="18"/>
        <end position="33"/>
    </location>
</feature>
<feature type="disulfide bond" evidence="1">
    <location>
        <begin position="27"/>
        <end position="38"/>
    </location>
</feature>
<accession>A6YR41</accession>
<evidence type="ECO:0000250" key="1"/>
<evidence type="ECO:0000305" key="2"/>
<reference key="1">
    <citation type="journal article" date="2011" name="J. Exp. Biol.">
        <title>A diverse family of novel peptide toxins from an unusual cone snail, Conus californicus.</title>
        <authorList>
            <person name="Gilly W.F."/>
            <person name="Richmond T.A."/>
            <person name="Duda T.F. Jr."/>
            <person name="Elliger C."/>
            <person name="Lebaric Z."/>
            <person name="Schulz J."/>
            <person name="Bingham J.P."/>
            <person name="Sweedler J.V."/>
        </authorList>
    </citation>
    <scope>NUCLEOTIDE SEQUENCE [MRNA]</scope>
    <source>
        <tissue>Venom duct</tissue>
    </source>
</reference>